<feature type="initiator methionine" description="Removed" evidence="1">
    <location>
        <position position="1"/>
    </location>
</feature>
<feature type="chain" id="PRO_0000417170" description="Transmembrane protein 245">
    <location>
        <begin position="2"/>
        <end position="876"/>
    </location>
</feature>
<feature type="transmembrane region" description="Helical" evidence="3">
    <location>
        <begin position="63"/>
        <end position="83"/>
    </location>
</feature>
<feature type="transmembrane region" description="Helical" evidence="3">
    <location>
        <begin position="122"/>
        <end position="142"/>
    </location>
</feature>
<feature type="transmembrane region" description="Helical" evidence="3">
    <location>
        <begin position="151"/>
        <end position="171"/>
    </location>
</feature>
<feature type="transmembrane region" description="Helical" evidence="3">
    <location>
        <begin position="188"/>
        <end position="208"/>
    </location>
</feature>
<feature type="transmembrane region" description="Helical" evidence="3">
    <location>
        <begin position="222"/>
        <end position="242"/>
    </location>
</feature>
<feature type="transmembrane region" description="Helical" evidence="3">
    <location>
        <begin position="244"/>
        <end position="264"/>
    </location>
</feature>
<feature type="transmembrane region" description="Helical" evidence="3">
    <location>
        <begin position="273"/>
        <end position="293"/>
    </location>
</feature>
<feature type="transmembrane region" description="Helical" evidence="3">
    <location>
        <begin position="354"/>
        <end position="374"/>
    </location>
</feature>
<feature type="transmembrane region" description="Helical" evidence="3">
    <location>
        <begin position="377"/>
        <end position="397"/>
    </location>
</feature>
<feature type="transmembrane region" description="Helical" evidence="3">
    <location>
        <begin position="460"/>
        <end position="480"/>
    </location>
</feature>
<feature type="transmembrane region" description="Helical" evidence="3">
    <location>
        <begin position="626"/>
        <end position="646"/>
    </location>
</feature>
<feature type="transmembrane region" description="Helical" evidence="3">
    <location>
        <begin position="650"/>
        <end position="670"/>
    </location>
</feature>
<feature type="transmembrane region" description="Helical" evidence="3">
    <location>
        <begin position="734"/>
        <end position="754"/>
    </location>
</feature>
<feature type="transmembrane region" description="Helical" evidence="3">
    <location>
        <begin position="755"/>
        <end position="775"/>
    </location>
</feature>
<feature type="transmembrane region" description="Helical" evidence="3">
    <location>
        <begin position="779"/>
        <end position="799"/>
    </location>
</feature>
<feature type="transmembrane region" description="Helical" evidence="3">
    <location>
        <begin position="818"/>
        <end position="838"/>
    </location>
</feature>
<feature type="region of interest" description="Disordered" evidence="4">
    <location>
        <begin position="1"/>
        <end position="32"/>
    </location>
</feature>
<feature type="region of interest" description="Disordered" evidence="4">
    <location>
        <begin position="289"/>
        <end position="338"/>
    </location>
</feature>
<feature type="compositionally biased region" description="Low complexity" evidence="4">
    <location>
        <begin position="314"/>
        <end position="330"/>
    </location>
</feature>
<feature type="modified residue" description="N-acetylalanine" evidence="1">
    <location>
        <position position="2"/>
    </location>
</feature>
<feature type="modified residue" description="Phosphoserine" evidence="1">
    <location>
        <position position="12"/>
    </location>
</feature>
<feature type="modified residue" description="Phosphoserine" evidence="1">
    <location>
        <position position="16"/>
    </location>
</feature>
<feature type="modified residue" description="Phosphothreonine" evidence="2">
    <location>
        <position position="32"/>
    </location>
</feature>
<feature type="modified residue" description="Phosphoserine" evidence="2">
    <location>
        <position position="320"/>
    </location>
</feature>
<feature type="modified residue" description="Phosphoserine" evidence="2">
    <location>
        <position position="324"/>
    </location>
</feature>
<feature type="modified residue" description="Phosphoserine" evidence="6">
    <location>
        <position position="327"/>
    </location>
</feature>
<feature type="modified residue" description="Phosphoserine" evidence="2">
    <location>
        <position position="329"/>
    </location>
</feature>
<feature type="modified residue" description="Phosphothreonine" evidence="2">
    <location>
        <position position="331"/>
    </location>
</feature>
<feature type="modified residue" description="Phosphoserine" evidence="2">
    <location>
        <position position="874"/>
    </location>
</feature>
<feature type="glycosylation site" description="N-linked (GlcNAc...) asparagine" evidence="3">
    <location>
        <position position="497"/>
    </location>
</feature>
<feature type="glycosylation site" description="N-linked (GlcNAc...) asparagine" evidence="3">
    <location>
        <position position="548"/>
    </location>
</feature>
<feature type="glycosylation site" description="N-linked (GlcNAc...) asparagine" evidence="3">
    <location>
        <position position="572"/>
    </location>
</feature>
<keyword id="KW-0007">Acetylation</keyword>
<keyword id="KW-0325">Glycoprotein</keyword>
<keyword id="KW-0472">Membrane</keyword>
<keyword id="KW-0597">Phosphoprotein</keyword>
<keyword id="KW-1185">Reference proteome</keyword>
<keyword id="KW-0812">Transmembrane</keyword>
<keyword id="KW-1133">Transmembrane helix</keyword>
<proteinExistence type="evidence at protein level"/>
<comment type="subcellular location">
    <subcellularLocation>
        <location evidence="5">Membrane</location>
        <topology evidence="5">Multi-pass membrane protein</topology>
    </subcellularLocation>
</comment>
<comment type="similarity">
    <text evidence="5">Belongs to the autoinducer-2 exporter (AI-2E) (TC 2.A.86) family.</text>
</comment>
<protein>
    <recommendedName>
        <fullName>Transmembrane protein 245</fullName>
    </recommendedName>
</protein>
<organism>
    <name type="scientific">Rattus norvegicus</name>
    <name type="common">Rat</name>
    <dbReference type="NCBI Taxonomy" id="10116"/>
    <lineage>
        <taxon>Eukaryota</taxon>
        <taxon>Metazoa</taxon>
        <taxon>Chordata</taxon>
        <taxon>Craniata</taxon>
        <taxon>Vertebrata</taxon>
        <taxon>Euteleostomi</taxon>
        <taxon>Mammalia</taxon>
        <taxon>Eutheria</taxon>
        <taxon>Euarchontoglires</taxon>
        <taxon>Glires</taxon>
        <taxon>Rodentia</taxon>
        <taxon>Myomorpha</taxon>
        <taxon>Muroidea</taxon>
        <taxon>Muridae</taxon>
        <taxon>Murinae</taxon>
        <taxon>Rattus</taxon>
    </lineage>
</organism>
<sequence length="876" mass="97282">MADRGGPAEEPSPRGSPRSEPRVPRTAGPSETPRTAALALRFDKPIKQAFYNTGAVLFVCLCCGAAVLVYFILEAFLRPLLWAVLCGTFLHPFKSSLTRLGRLWLRRLHRAHTPIVLAALLLPLCFADYGVEALGEQALRRRRLLLLLGAGGPLLYGLYCLGSYLGVQVLLAHAGALICRGLDYFSSLWIWTLVVGYVLMVSFKWNASTQHYLRAVSIPVWMILLFHIASLAGSWRIPVFLVIVFLMSAGTLYEKQNEKESAGAELPGQVISMAASTLANLAISITGYESSSEDQPSDPSAEPTDKGEPPPAPSASSSSSSRSSPSSPSPTLGRQRPEMGTFLRKKKTSDIYFVSLVWAIIAVQLWLNLWIVQLLPVPVAVWIIKKLVIHFGVVGFLEKRCRAWWQVMESFLKERQEALAPWPITGLGKFLLKVDSKLWHWLNKKMIIWLEKMLDKIISIFIIFLLVIGTLLLALLLTAKVHQESVHMIEVTSSLINETLANHPEWANWLPEAQVVQRALNSAANNVYQYGREWITHKLHKILGDKVNNTAVIEKQVLELWDRLYHSWFVKNVTHSGRHKGHKMHVSRQNSWLGDILDWQDIASFVHENIETFLSILESLWIVMSRNVSLLFTTVTTLLTILFYSGTALLNFVLSLIIFLTTLFYLLSSSDEYYKPVKWVISLTPLSQPGPSSNIIGQSVEEAIRGVFDASLKMAGFYGLYTWLTHTVFGINIVFIPSALAAILGAVPFLGTYWAAVPAVLDLWLTQGLGCKAVLLLVFHLLPTYFVDTAIYSDISGGGHPYLTGLAVAGGAYYLGLEGAIIGPILLCILVVASNIYSAMLVSPTNSMPTPSQTPWPAQTQRTFRDISEDLKSSVD</sequence>
<gene>
    <name type="primary">Tmem245</name>
</gene>
<name>TM245_RAT</name>
<accession>D3ZXD8</accession>
<dbReference type="EMBL" id="AABR03042316">
    <property type="status" value="NOT_ANNOTATED_CDS"/>
    <property type="molecule type" value="Genomic_DNA"/>
</dbReference>
<dbReference type="EMBL" id="AABR03042476">
    <property type="status" value="NOT_ANNOTATED_CDS"/>
    <property type="molecule type" value="Genomic_DNA"/>
</dbReference>
<dbReference type="EMBL" id="AABR03046793">
    <property type="status" value="NOT_ANNOTATED_CDS"/>
    <property type="molecule type" value="Genomic_DNA"/>
</dbReference>
<dbReference type="EMBL" id="AABR03041614">
    <property type="status" value="NOT_ANNOTATED_CDS"/>
    <property type="molecule type" value="Genomic_DNA"/>
</dbReference>
<dbReference type="RefSeq" id="NP_001406500.1">
    <property type="nucleotide sequence ID" value="NM_001419571.2"/>
</dbReference>
<dbReference type="RefSeq" id="XP_003749993.1">
    <property type="nucleotide sequence ID" value="XM_003749945.3"/>
</dbReference>
<dbReference type="RefSeq" id="XP_003754079.1">
    <property type="nucleotide sequence ID" value="XM_003754031.3"/>
</dbReference>
<dbReference type="FunCoup" id="D3ZXD8">
    <property type="interactions" value="3912"/>
</dbReference>
<dbReference type="STRING" id="10116.ENSRNOP00000063739"/>
<dbReference type="GlyCosmos" id="D3ZXD8">
    <property type="glycosylation" value="3 sites, No reported glycans"/>
</dbReference>
<dbReference type="GlyGen" id="D3ZXD8">
    <property type="glycosylation" value="4 sites"/>
</dbReference>
<dbReference type="iPTMnet" id="D3ZXD8"/>
<dbReference type="PhosphoSitePlus" id="D3ZXD8"/>
<dbReference type="PaxDb" id="10116-ENSRNOP00000063739"/>
<dbReference type="Ensembl" id="ENSRNOT00000032299.6">
    <property type="protein sequence ID" value="ENSRNOP00000035996.4"/>
    <property type="gene ID" value="ENSRNOG00000026271.8"/>
</dbReference>
<dbReference type="GeneID" id="298020"/>
<dbReference type="UCSC" id="RGD:1308958">
    <property type="organism name" value="rat"/>
</dbReference>
<dbReference type="AGR" id="RGD:1308958"/>
<dbReference type="RGD" id="1308958">
    <property type="gene designation" value="Tmem245"/>
</dbReference>
<dbReference type="eggNOG" id="KOG2365">
    <property type="taxonomic scope" value="Eukaryota"/>
</dbReference>
<dbReference type="GeneTree" id="ENSGT00390000001667"/>
<dbReference type="HOGENOM" id="CLU_005960_0_0_1"/>
<dbReference type="InParanoid" id="D3ZXD8"/>
<dbReference type="PhylomeDB" id="D3ZXD8"/>
<dbReference type="PRO" id="PR:D3ZXD8"/>
<dbReference type="Proteomes" id="UP000002494">
    <property type="component" value="Chromosome 5"/>
</dbReference>
<dbReference type="Bgee" id="ENSRNOG00000026271">
    <property type="expression patterns" value="Expressed in heart and 18 other cell types or tissues"/>
</dbReference>
<dbReference type="ExpressionAtlas" id="D3ZXD8">
    <property type="expression patterns" value="baseline and differential"/>
</dbReference>
<dbReference type="GO" id="GO:0016020">
    <property type="term" value="C:membrane"/>
    <property type="evidence" value="ECO:0007669"/>
    <property type="project" value="UniProtKB-SubCell"/>
</dbReference>
<dbReference type="InterPro" id="IPR002549">
    <property type="entry name" value="AI-2E-like"/>
</dbReference>
<dbReference type="PANTHER" id="PTHR21716">
    <property type="entry name" value="TRANSMEMBRANE PROTEIN"/>
    <property type="match status" value="1"/>
</dbReference>
<dbReference type="PANTHER" id="PTHR21716:SF4">
    <property type="entry name" value="TRANSMEMBRANE PROTEIN 245"/>
    <property type="match status" value="1"/>
</dbReference>
<dbReference type="Pfam" id="PF01594">
    <property type="entry name" value="AI-2E_transport"/>
    <property type="match status" value="1"/>
</dbReference>
<evidence type="ECO:0000250" key="1">
    <source>
        <dbReference type="UniProtKB" id="B1AZA5"/>
    </source>
</evidence>
<evidence type="ECO:0000250" key="2">
    <source>
        <dbReference type="UniProtKB" id="Q9H330"/>
    </source>
</evidence>
<evidence type="ECO:0000255" key="3"/>
<evidence type="ECO:0000256" key="4">
    <source>
        <dbReference type="SAM" id="MobiDB-lite"/>
    </source>
</evidence>
<evidence type="ECO:0000305" key="5"/>
<evidence type="ECO:0007744" key="6">
    <source>
    </source>
</evidence>
<reference key="1">
    <citation type="journal article" date="2004" name="Nature">
        <title>Genome sequence of the Brown Norway rat yields insights into mammalian evolution.</title>
        <authorList>
            <person name="Gibbs R.A."/>
            <person name="Weinstock G.M."/>
            <person name="Metzker M.L."/>
            <person name="Muzny D.M."/>
            <person name="Sodergren E.J."/>
            <person name="Scherer S."/>
            <person name="Scott G."/>
            <person name="Steffen D."/>
            <person name="Worley K.C."/>
            <person name="Burch P.E."/>
            <person name="Okwuonu G."/>
            <person name="Hines S."/>
            <person name="Lewis L."/>
            <person name="Deramo C."/>
            <person name="Delgado O."/>
            <person name="Dugan-Rocha S."/>
            <person name="Miner G."/>
            <person name="Morgan M."/>
            <person name="Hawes A."/>
            <person name="Gill R."/>
            <person name="Holt R.A."/>
            <person name="Adams M.D."/>
            <person name="Amanatides P.G."/>
            <person name="Baden-Tillson H."/>
            <person name="Barnstead M."/>
            <person name="Chin S."/>
            <person name="Evans C.A."/>
            <person name="Ferriera S."/>
            <person name="Fosler C."/>
            <person name="Glodek A."/>
            <person name="Gu Z."/>
            <person name="Jennings D."/>
            <person name="Kraft C.L."/>
            <person name="Nguyen T."/>
            <person name="Pfannkoch C.M."/>
            <person name="Sitter C."/>
            <person name="Sutton G.G."/>
            <person name="Venter J.C."/>
            <person name="Woodage T."/>
            <person name="Smith D."/>
            <person name="Lee H.-M."/>
            <person name="Gustafson E."/>
            <person name="Cahill P."/>
            <person name="Kana A."/>
            <person name="Doucette-Stamm L."/>
            <person name="Weinstock K."/>
            <person name="Fechtel K."/>
            <person name="Weiss R.B."/>
            <person name="Dunn D.M."/>
            <person name="Green E.D."/>
            <person name="Blakesley R.W."/>
            <person name="Bouffard G.G."/>
            <person name="De Jong P.J."/>
            <person name="Osoegawa K."/>
            <person name="Zhu B."/>
            <person name="Marra M."/>
            <person name="Schein J."/>
            <person name="Bosdet I."/>
            <person name="Fjell C."/>
            <person name="Jones S."/>
            <person name="Krzywinski M."/>
            <person name="Mathewson C."/>
            <person name="Siddiqui A."/>
            <person name="Wye N."/>
            <person name="McPherson J."/>
            <person name="Zhao S."/>
            <person name="Fraser C.M."/>
            <person name="Shetty J."/>
            <person name="Shatsman S."/>
            <person name="Geer K."/>
            <person name="Chen Y."/>
            <person name="Abramzon S."/>
            <person name="Nierman W.C."/>
            <person name="Havlak P.H."/>
            <person name="Chen R."/>
            <person name="Durbin K.J."/>
            <person name="Egan A."/>
            <person name="Ren Y."/>
            <person name="Song X.-Z."/>
            <person name="Li B."/>
            <person name="Liu Y."/>
            <person name="Qin X."/>
            <person name="Cawley S."/>
            <person name="Cooney A.J."/>
            <person name="D'Souza L.M."/>
            <person name="Martin K."/>
            <person name="Wu J.Q."/>
            <person name="Gonzalez-Garay M.L."/>
            <person name="Jackson A.R."/>
            <person name="Kalafus K.J."/>
            <person name="McLeod M.P."/>
            <person name="Milosavljevic A."/>
            <person name="Virk D."/>
            <person name="Volkov A."/>
            <person name="Wheeler D.A."/>
            <person name="Zhang Z."/>
            <person name="Bailey J.A."/>
            <person name="Eichler E.E."/>
            <person name="Tuzun E."/>
            <person name="Birney E."/>
            <person name="Mongin E."/>
            <person name="Ureta-Vidal A."/>
            <person name="Woodwark C."/>
            <person name="Zdobnov E."/>
            <person name="Bork P."/>
            <person name="Suyama M."/>
            <person name="Torrents D."/>
            <person name="Alexandersson M."/>
            <person name="Trask B.J."/>
            <person name="Young J.M."/>
            <person name="Huang H."/>
            <person name="Wang H."/>
            <person name="Xing H."/>
            <person name="Daniels S."/>
            <person name="Gietzen D."/>
            <person name="Schmidt J."/>
            <person name="Stevens K."/>
            <person name="Vitt U."/>
            <person name="Wingrove J."/>
            <person name="Camara F."/>
            <person name="Mar Alba M."/>
            <person name="Abril J.F."/>
            <person name="Guigo R."/>
            <person name="Smit A."/>
            <person name="Dubchak I."/>
            <person name="Rubin E.M."/>
            <person name="Couronne O."/>
            <person name="Poliakov A."/>
            <person name="Huebner N."/>
            <person name="Ganten D."/>
            <person name="Goesele C."/>
            <person name="Hummel O."/>
            <person name="Kreitler T."/>
            <person name="Lee Y.-A."/>
            <person name="Monti J."/>
            <person name="Schulz H."/>
            <person name="Zimdahl H."/>
            <person name="Himmelbauer H."/>
            <person name="Lehrach H."/>
            <person name="Jacob H.J."/>
            <person name="Bromberg S."/>
            <person name="Gullings-Handley J."/>
            <person name="Jensen-Seaman M.I."/>
            <person name="Kwitek A.E."/>
            <person name="Lazar J."/>
            <person name="Pasko D."/>
            <person name="Tonellato P.J."/>
            <person name="Twigger S."/>
            <person name="Ponting C.P."/>
            <person name="Duarte J.M."/>
            <person name="Rice S."/>
            <person name="Goodstadt L."/>
            <person name="Beatson S.A."/>
            <person name="Emes R.D."/>
            <person name="Winter E.E."/>
            <person name="Webber C."/>
            <person name="Brandt P."/>
            <person name="Nyakatura G."/>
            <person name="Adetobi M."/>
            <person name="Chiaromonte F."/>
            <person name="Elnitski L."/>
            <person name="Eswara P."/>
            <person name="Hardison R.C."/>
            <person name="Hou M."/>
            <person name="Kolbe D."/>
            <person name="Makova K."/>
            <person name="Miller W."/>
            <person name="Nekrutenko A."/>
            <person name="Riemer C."/>
            <person name="Schwartz S."/>
            <person name="Taylor J."/>
            <person name="Yang S."/>
            <person name="Zhang Y."/>
            <person name="Lindpaintner K."/>
            <person name="Andrews T.D."/>
            <person name="Caccamo M."/>
            <person name="Clamp M."/>
            <person name="Clarke L."/>
            <person name="Curwen V."/>
            <person name="Durbin R.M."/>
            <person name="Eyras E."/>
            <person name="Searle S.M."/>
            <person name="Cooper G.M."/>
            <person name="Batzoglou S."/>
            <person name="Brudno M."/>
            <person name="Sidow A."/>
            <person name="Stone E.A."/>
            <person name="Payseur B.A."/>
            <person name="Bourque G."/>
            <person name="Lopez-Otin C."/>
            <person name="Puente X.S."/>
            <person name="Chakrabarti K."/>
            <person name="Chatterji S."/>
            <person name="Dewey C."/>
            <person name="Pachter L."/>
            <person name="Bray N."/>
            <person name="Yap V.B."/>
            <person name="Caspi A."/>
            <person name="Tesler G."/>
            <person name="Pevzner P.A."/>
            <person name="Haussler D."/>
            <person name="Roskin K.M."/>
            <person name="Baertsch R."/>
            <person name="Clawson H."/>
            <person name="Furey T.S."/>
            <person name="Hinrichs A.S."/>
            <person name="Karolchik D."/>
            <person name="Kent W.J."/>
            <person name="Rosenbloom K.R."/>
            <person name="Trumbower H."/>
            <person name="Weirauch M."/>
            <person name="Cooper D.N."/>
            <person name="Stenson P.D."/>
            <person name="Ma B."/>
            <person name="Brent M."/>
            <person name="Arumugam M."/>
            <person name="Shteynberg D."/>
            <person name="Copley R.R."/>
            <person name="Taylor M.S."/>
            <person name="Riethman H."/>
            <person name="Mudunuri U."/>
            <person name="Peterson J."/>
            <person name="Guyer M."/>
            <person name="Felsenfeld A."/>
            <person name="Old S."/>
            <person name="Mockrin S."/>
            <person name="Collins F.S."/>
        </authorList>
    </citation>
    <scope>NUCLEOTIDE SEQUENCE [LARGE SCALE GENOMIC DNA]</scope>
    <source>
        <strain>Brown Norway</strain>
    </source>
</reference>
<reference key="2">
    <citation type="journal article" date="2012" name="Nat. Commun.">
        <title>Quantitative maps of protein phosphorylation sites across 14 different rat organs and tissues.</title>
        <authorList>
            <person name="Lundby A."/>
            <person name="Secher A."/>
            <person name="Lage K."/>
            <person name="Nordsborg N.B."/>
            <person name="Dmytriyev A."/>
            <person name="Lundby C."/>
            <person name="Olsen J.V."/>
        </authorList>
    </citation>
    <scope>PHOSPHORYLATION [LARGE SCALE ANALYSIS] AT SER-327</scope>
    <scope>IDENTIFICATION BY MASS SPECTROMETRY [LARGE SCALE ANALYSIS]</scope>
</reference>